<feature type="chain" id="PRO_0000056592" description="Benzaldehyde dehydrogenase [NAD(+)] I">
    <location>
        <begin position="1"/>
        <end position="23" status="greater than"/>
    </location>
</feature>
<feature type="non-terminal residue">
    <location>
        <position position="23"/>
    </location>
</feature>
<keyword id="KW-0058">Aromatic hydrocarbons catabolism</keyword>
<keyword id="KW-0903">Direct protein sequencing</keyword>
<keyword id="KW-0520">NAD</keyword>
<keyword id="KW-0560">Oxidoreductase</keyword>
<name>XYLC1_ACIGI</name>
<accession>P46365</accession>
<protein>
    <recommendedName>
        <fullName>Benzaldehyde dehydrogenase [NAD(+)] I</fullName>
        <ecNumber>1.2.1.28</ecNumber>
    </recommendedName>
</protein>
<comment type="catalytic activity">
    <reaction>
        <text>benzaldehyde + NAD(+) + H2O = benzoate + NADH + 2 H(+)</text>
        <dbReference type="Rhea" id="RHEA:11840"/>
        <dbReference type="ChEBI" id="CHEBI:15377"/>
        <dbReference type="ChEBI" id="CHEBI:15378"/>
        <dbReference type="ChEBI" id="CHEBI:16150"/>
        <dbReference type="ChEBI" id="CHEBI:17169"/>
        <dbReference type="ChEBI" id="CHEBI:57540"/>
        <dbReference type="ChEBI" id="CHEBI:57945"/>
        <dbReference type="EC" id="1.2.1.28"/>
    </reaction>
</comment>
<comment type="subunit">
    <text>Homotetramer.</text>
</comment>
<comment type="similarity">
    <text evidence="1">Belongs to the aldehyde dehydrogenase family.</text>
</comment>
<reference key="1">
    <citation type="journal article" date="1991" name="Biochem. J.">
        <title>Comparison of benzyl alcohol dehydrogenases and benzaldehyde dehydrogenases from the benzyl alcohol and mandelate pathways in Acinetobacter calcoaceticus and from the TOL-plasmid-encoded toluene pathway in Pseudomonas putida. N-terminal amino acid sequences, amino acid compositions and immunological cross-reactions.</title>
        <authorList>
            <person name="Chalmers R.M."/>
            <person name="Keen J.N."/>
            <person name="Fewson C.A."/>
        </authorList>
    </citation>
    <scope>PROTEIN SEQUENCE</scope>
    <source>
        <strain>ATCC 11171 / DSM 590 / CCUG 2491 / LMG 988 / NCIMB 8250 / CIP 63.46 / B94</strain>
    </source>
</reference>
<organism>
    <name type="scientific">Acinetobacter guillouiae</name>
    <name type="common">Acinetobacter genomosp. 11</name>
    <dbReference type="NCBI Taxonomy" id="106649"/>
    <lineage>
        <taxon>Bacteria</taxon>
        <taxon>Pseudomonadati</taxon>
        <taxon>Pseudomonadota</taxon>
        <taxon>Gammaproteobacteria</taxon>
        <taxon>Moraxellales</taxon>
        <taxon>Moraxellaceae</taxon>
        <taxon>Acinetobacter</taxon>
    </lineage>
</organism>
<proteinExistence type="evidence at protein level"/>
<sequence length="23" mass="2750">PNIQTKIIEQIWKEHIFQGTVVK</sequence>
<dbReference type="EC" id="1.2.1.28"/>
<dbReference type="STRING" id="106649.GCA_000829655_01261"/>
<dbReference type="GO" id="GO:0018479">
    <property type="term" value="F:benzaldehyde dehydrogenase (NAD+) activity"/>
    <property type="evidence" value="ECO:0007669"/>
    <property type="project" value="UniProtKB-EC"/>
</dbReference>
<dbReference type="GO" id="GO:0009056">
    <property type="term" value="P:catabolic process"/>
    <property type="evidence" value="ECO:0007669"/>
    <property type="project" value="UniProtKB-KW"/>
</dbReference>
<evidence type="ECO:0000305" key="1"/>